<keyword id="KW-0687">Ribonucleoprotein</keyword>
<keyword id="KW-0689">Ribosomal protein</keyword>
<protein>
    <recommendedName>
        <fullName evidence="1">Large ribosomal subunit protein uL13</fullName>
    </recommendedName>
    <alternativeName>
        <fullName>60S ribosomal protein L13a</fullName>
    </alternativeName>
</protein>
<dbReference type="EMBL" id="AF400184">
    <property type="protein sequence ID" value="AAK92156.1"/>
    <property type="molecule type" value="mRNA"/>
</dbReference>
<dbReference type="SMR" id="Q962U0"/>
<dbReference type="EnsemblMetazoa" id="XM_035587859.2">
    <property type="protein sequence ID" value="XP_035443752.1"/>
    <property type="gene ID" value="LOC118271703"/>
</dbReference>
<dbReference type="OrthoDB" id="1882297at2759"/>
<dbReference type="Proteomes" id="UP000829999">
    <property type="component" value="Unplaced"/>
</dbReference>
<dbReference type="GO" id="GO:0022625">
    <property type="term" value="C:cytosolic large ribosomal subunit"/>
    <property type="evidence" value="ECO:0007669"/>
    <property type="project" value="TreeGrafter"/>
</dbReference>
<dbReference type="GO" id="GO:0003729">
    <property type="term" value="F:mRNA binding"/>
    <property type="evidence" value="ECO:0007669"/>
    <property type="project" value="TreeGrafter"/>
</dbReference>
<dbReference type="GO" id="GO:0003735">
    <property type="term" value="F:structural constituent of ribosome"/>
    <property type="evidence" value="ECO:0007669"/>
    <property type="project" value="InterPro"/>
</dbReference>
<dbReference type="GO" id="GO:0017148">
    <property type="term" value="P:negative regulation of translation"/>
    <property type="evidence" value="ECO:0007669"/>
    <property type="project" value="TreeGrafter"/>
</dbReference>
<dbReference type="GO" id="GO:0006412">
    <property type="term" value="P:translation"/>
    <property type="evidence" value="ECO:0007669"/>
    <property type="project" value="InterPro"/>
</dbReference>
<dbReference type="CDD" id="cd00392">
    <property type="entry name" value="Ribosomal_L13"/>
    <property type="match status" value="1"/>
</dbReference>
<dbReference type="FunFam" id="3.90.1180.10:FF:000002">
    <property type="entry name" value="60S ribosomal protein L16"/>
    <property type="match status" value="1"/>
</dbReference>
<dbReference type="Gene3D" id="6.10.250.3250">
    <property type="match status" value="1"/>
</dbReference>
<dbReference type="Gene3D" id="3.90.1180.10">
    <property type="entry name" value="Ribosomal protein L13"/>
    <property type="match status" value="1"/>
</dbReference>
<dbReference type="HAMAP" id="MF_01366">
    <property type="entry name" value="Ribosomal_uL13"/>
    <property type="match status" value="1"/>
</dbReference>
<dbReference type="InterPro" id="IPR005822">
    <property type="entry name" value="Ribosomal_uL13"/>
</dbReference>
<dbReference type="InterPro" id="IPR023563">
    <property type="entry name" value="Ribosomal_uL13_CS"/>
</dbReference>
<dbReference type="InterPro" id="IPR005755">
    <property type="entry name" value="Ribosomal_uL13_euk/arc"/>
</dbReference>
<dbReference type="InterPro" id="IPR036899">
    <property type="entry name" value="Ribosomal_uL13_sf"/>
</dbReference>
<dbReference type="NCBIfam" id="TIGR01077">
    <property type="entry name" value="L13_A_E"/>
    <property type="match status" value="1"/>
</dbReference>
<dbReference type="PANTHER" id="PTHR11545:SF3">
    <property type="entry name" value="LARGE RIBOSOMAL SUBUNIT PROTEIN UL13"/>
    <property type="match status" value="1"/>
</dbReference>
<dbReference type="PANTHER" id="PTHR11545">
    <property type="entry name" value="RIBOSOMAL PROTEIN L13"/>
    <property type="match status" value="1"/>
</dbReference>
<dbReference type="Pfam" id="PF00572">
    <property type="entry name" value="Ribosomal_L13"/>
    <property type="match status" value="1"/>
</dbReference>
<dbReference type="SUPFAM" id="SSF52161">
    <property type="entry name" value="Ribosomal protein L13"/>
    <property type="match status" value="1"/>
</dbReference>
<dbReference type="PROSITE" id="PS00783">
    <property type="entry name" value="RIBOSOMAL_L13"/>
    <property type="match status" value="1"/>
</dbReference>
<gene>
    <name type="primary">RpL13A</name>
</gene>
<name>RL13A_SPOFR</name>
<feature type="chain" id="PRO_0000133777" description="Large ribosomal subunit protein uL13">
    <location>
        <begin position="1"/>
        <end position="204"/>
    </location>
</feature>
<comment type="similarity">
    <text evidence="1">Belongs to the universal ribosomal protein uL13 family.</text>
</comment>
<accession>Q962U0</accession>
<reference key="1">
    <citation type="journal article" date="2003" name="Bioinformatics">
        <title>Annotation pattern of ESTs from Spodoptera frugiperda Sf9 cells and analysis of the ribosomal protein genes reveal insect-specific features and unexpectedly low codon usage bias.</title>
        <authorList>
            <person name="Landais I."/>
            <person name="Ogliastro M."/>
            <person name="Mita K."/>
            <person name="Nohata J."/>
            <person name="Lopez-Ferber M."/>
            <person name="Duonor-Cerutti M."/>
            <person name="Shimada T."/>
            <person name="Fournier P."/>
            <person name="Devauchelle G."/>
        </authorList>
    </citation>
    <scope>NUCLEOTIDE SEQUENCE [LARGE SCALE MRNA]</scope>
</reference>
<proteinExistence type="evidence at transcript level"/>
<evidence type="ECO:0000305" key="1"/>
<organism>
    <name type="scientific">Spodoptera frugiperda</name>
    <name type="common">Fall armyworm</name>
    <dbReference type="NCBI Taxonomy" id="7108"/>
    <lineage>
        <taxon>Eukaryota</taxon>
        <taxon>Metazoa</taxon>
        <taxon>Ecdysozoa</taxon>
        <taxon>Arthropoda</taxon>
        <taxon>Hexapoda</taxon>
        <taxon>Insecta</taxon>
        <taxon>Pterygota</taxon>
        <taxon>Neoptera</taxon>
        <taxon>Endopterygota</taxon>
        <taxon>Lepidoptera</taxon>
        <taxon>Glossata</taxon>
        <taxon>Ditrysia</taxon>
        <taxon>Noctuoidea</taxon>
        <taxon>Noctuidae</taxon>
        <taxon>Amphipyrinae</taxon>
        <taxon>Spodoptera</taxon>
    </lineage>
</organism>
<sequence>MTGFSNKAIVIDGRGHLLGRLAAVIAKVLLEGNKVVVVRCEQINISGNFFRNKLKFMSFLRKRCNVNPARGPFHFRAPSKILWKTVRGMIPHKTERGKSALRRLRAYDGCPPPYDNRRRVVVPAALRVFCLKPGRKYCHVGRLSHEVGWKYRDVVRKLENKRKVKSVKLMAYEKKLKRITKESGEKVAKTTAPFTAVIQSYGYN</sequence>